<gene>
    <name type="ordered locus">MJ0976</name>
</gene>
<reference key="1">
    <citation type="journal article" date="1996" name="Science">
        <title>Complete genome sequence of the methanogenic archaeon, Methanococcus jannaschii.</title>
        <authorList>
            <person name="Bult C.J."/>
            <person name="White O."/>
            <person name="Olsen G.J."/>
            <person name="Zhou L."/>
            <person name="Fleischmann R.D."/>
            <person name="Sutton G.G."/>
            <person name="Blake J.A."/>
            <person name="FitzGerald L.M."/>
            <person name="Clayton R.A."/>
            <person name="Gocayne J.D."/>
            <person name="Kerlavage A.R."/>
            <person name="Dougherty B.A."/>
            <person name="Tomb J.-F."/>
            <person name="Adams M.D."/>
            <person name="Reich C.I."/>
            <person name="Overbeek R."/>
            <person name="Kirkness E.F."/>
            <person name="Weinstock K.G."/>
            <person name="Merrick J.M."/>
            <person name="Glodek A."/>
            <person name="Scott J.L."/>
            <person name="Geoghagen N.S.M."/>
            <person name="Weidman J.F."/>
            <person name="Fuhrmann J.L."/>
            <person name="Nguyen D."/>
            <person name="Utterback T.R."/>
            <person name="Kelley J.M."/>
            <person name="Peterson J.D."/>
            <person name="Sadow P.W."/>
            <person name="Hanna M.C."/>
            <person name="Cotton M.D."/>
            <person name="Roberts K.M."/>
            <person name="Hurst M.A."/>
            <person name="Kaine B.P."/>
            <person name="Borodovsky M."/>
            <person name="Klenk H.-P."/>
            <person name="Fraser C.M."/>
            <person name="Smith H.O."/>
            <person name="Woese C.R."/>
            <person name="Venter J.C."/>
        </authorList>
    </citation>
    <scope>NUCLEOTIDE SEQUENCE [LARGE SCALE GENOMIC DNA]</scope>
    <source>
        <strain>ATCC 43067 / DSM 2661 / JAL-1 / JCM 10045 / NBRC 100440</strain>
    </source>
</reference>
<organism>
    <name type="scientific">Methanocaldococcus jannaschii (strain ATCC 43067 / DSM 2661 / JAL-1 / JCM 10045 / NBRC 100440)</name>
    <name type="common">Methanococcus jannaschii</name>
    <dbReference type="NCBI Taxonomy" id="243232"/>
    <lineage>
        <taxon>Archaea</taxon>
        <taxon>Methanobacteriati</taxon>
        <taxon>Methanobacteriota</taxon>
        <taxon>Methanomada group</taxon>
        <taxon>Methanococci</taxon>
        <taxon>Methanococcales</taxon>
        <taxon>Methanocaldococcaceae</taxon>
        <taxon>Methanocaldococcus</taxon>
    </lineage>
</organism>
<keyword id="KW-1003">Cell membrane</keyword>
<keyword id="KW-0472">Membrane</keyword>
<keyword id="KW-1185">Reference proteome</keyword>
<keyword id="KW-0812">Transmembrane</keyword>
<keyword id="KW-1133">Transmembrane helix</keyword>
<proteinExistence type="predicted"/>
<sequence>MSEDSNPKNDLKLKMYETFRSHIERAENSFWTYMLFYLQFLVGINGAVGILCRYLSNNLQNFPTEIIIAFLALVNILLSLIGIIVIIERGKWFFRNMILTVNLERYILKEEHIKIIPKRYSKFDNFNKVIDTTGRIFISIFIGIYMISVIALGYLANSCKTIILFGTGFFIIVVIIYFLDLLDWIYRRIDSNEYRKVIGVVLFISFIPPLMNYFIYDIINLICSYIPESFIVAMIVILIFVIIDVYYNAKKHIENTIIMLSLERTVNDIDDIIKILKNIRLDDTKKEELKKKLRKIKKLIENVIKLLGGTSENGTQNNNLEEAKSKITEACRKISGNNIFEAINELNEAKYIINNKINELTQSDSS</sequence>
<name>Y976_METJA</name>
<evidence type="ECO:0000255" key="1"/>
<evidence type="ECO:0000305" key="2"/>
<dbReference type="EMBL" id="L77117">
    <property type="protein sequence ID" value="AAB98982.1"/>
    <property type="molecule type" value="Genomic_DNA"/>
</dbReference>
<dbReference type="PIR" id="H64421">
    <property type="entry name" value="H64421"/>
</dbReference>
<dbReference type="RefSeq" id="WP_010870490.1">
    <property type="nucleotide sequence ID" value="NC_000909.1"/>
</dbReference>
<dbReference type="SMR" id="Q58386"/>
<dbReference type="STRING" id="243232.MJ_0976"/>
<dbReference type="PaxDb" id="243232-MJ_0976"/>
<dbReference type="EnsemblBacteria" id="AAB98982">
    <property type="protein sequence ID" value="AAB98982"/>
    <property type="gene ID" value="MJ_0976"/>
</dbReference>
<dbReference type="GeneID" id="1451874"/>
<dbReference type="KEGG" id="mja:MJ_0976"/>
<dbReference type="HOGENOM" id="CLU_755685_0_0_2"/>
<dbReference type="InParanoid" id="Q58386"/>
<dbReference type="Proteomes" id="UP000000805">
    <property type="component" value="Chromosome"/>
</dbReference>
<dbReference type="GO" id="GO:0005886">
    <property type="term" value="C:plasma membrane"/>
    <property type="evidence" value="ECO:0007669"/>
    <property type="project" value="UniProtKB-SubCell"/>
</dbReference>
<accession>Q58386</accession>
<protein>
    <recommendedName>
        <fullName>Uncharacterized protein MJ0976</fullName>
    </recommendedName>
</protein>
<comment type="subcellular location">
    <subcellularLocation>
        <location evidence="2">Cell membrane</location>
        <topology evidence="2">Multi-pass membrane protein</topology>
    </subcellularLocation>
</comment>
<feature type="chain" id="PRO_0000107126" description="Uncharacterized protein MJ0976">
    <location>
        <begin position="1"/>
        <end position="366"/>
    </location>
</feature>
<feature type="transmembrane region" description="Helical" evidence="1">
    <location>
        <begin position="30"/>
        <end position="50"/>
    </location>
</feature>
<feature type="transmembrane region" description="Helical" evidence="1">
    <location>
        <begin position="66"/>
        <end position="86"/>
    </location>
</feature>
<feature type="transmembrane region" description="Helical" evidence="1">
    <location>
        <begin position="136"/>
        <end position="156"/>
    </location>
</feature>
<feature type="transmembrane region" description="Helical" evidence="1">
    <location>
        <begin position="162"/>
        <end position="182"/>
    </location>
</feature>
<feature type="transmembrane region" description="Helical" evidence="1">
    <location>
        <begin position="198"/>
        <end position="218"/>
    </location>
</feature>
<feature type="transmembrane region" description="Helical" evidence="1">
    <location>
        <begin position="225"/>
        <end position="245"/>
    </location>
</feature>